<comment type="subunit">
    <text evidence="1">Component of the mitochondrial small ribosomal subunit.</text>
</comment>
<comment type="subcellular location">
    <subcellularLocation>
        <location evidence="1">Mitochondrion</location>
    </subcellularLocation>
</comment>
<comment type="similarity">
    <text evidence="2">Belongs to the mitochondrion-specific ribosomal protein mS23 family.</text>
</comment>
<proteinExistence type="inferred from homology"/>
<name>RT25_PYRO7</name>
<dbReference type="EMBL" id="CM001236">
    <property type="protein sequence ID" value="EHA47569.1"/>
    <property type="molecule type" value="Genomic_DNA"/>
</dbReference>
<dbReference type="RefSeq" id="XP_003719936.1">
    <property type="nucleotide sequence ID" value="XM_003719888.1"/>
</dbReference>
<dbReference type="SMR" id="A4R4J0"/>
<dbReference type="FunCoup" id="A4R4J0">
    <property type="interactions" value="114"/>
</dbReference>
<dbReference type="STRING" id="242507.A4R4J0"/>
<dbReference type="EnsemblFungi" id="MGG_03928T0">
    <property type="protein sequence ID" value="MGG_03928T0"/>
    <property type="gene ID" value="MGG_03928"/>
</dbReference>
<dbReference type="GeneID" id="2677158"/>
<dbReference type="KEGG" id="mgr:MGG_03928"/>
<dbReference type="VEuPathDB" id="FungiDB:MGG_03928"/>
<dbReference type="eggNOG" id="ENOG502RZQQ">
    <property type="taxonomic scope" value="Eukaryota"/>
</dbReference>
<dbReference type="HOGENOM" id="CLU_081350_0_0_1"/>
<dbReference type="InParanoid" id="A4R4J0"/>
<dbReference type="OMA" id="ENWKIWA"/>
<dbReference type="OrthoDB" id="5542239at2759"/>
<dbReference type="Proteomes" id="UP000009058">
    <property type="component" value="Chromosome 6"/>
</dbReference>
<dbReference type="GO" id="GO:0005763">
    <property type="term" value="C:mitochondrial small ribosomal subunit"/>
    <property type="evidence" value="ECO:0000250"/>
    <property type="project" value="PAMGO_MGG"/>
</dbReference>
<dbReference type="GO" id="GO:0005739">
    <property type="term" value="C:mitochondrion"/>
    <property type="evidence" value="ECO:0000250"/>
    <property type="project" value="PAMGO_MGG"/>
</dbReference>
<dbReference type="GO" id="GO:0003735">
    <property type="term" value="F:structural constituent of ribosome"/>
    <property type="evidence" value="ECO:0000250"/>
    <property type="project" value="PAMGO_MGG"/>
</dbReference>
<dbReference type="GO" id="GO:0006412">
    <property type="term" value="P:translation"/>
    <property type="evidence" value="ECO:0000250"/>
    <property type="project" value="PAMGO_MGG"/>
</dbReference>
<dbReference type="CDD" id="cd23701">
    <property type="entry name" value="At1g26750"/>
    <property type="match status" value="1"/>
</dbReference>
<dbReference type="InterPro" id="IPR016939">
    <property type="entry name" value="Ribosomal_mS23_fun"/>
</dbReference>
<dbReference type="PANTHER" id="PTHR37799">
    <property type="entry name" value="37S RIBOSOMAL PROTEIN S25, MITOCHONDRIAL"/>
    <property type="match status" value="1"/>
</dbReference>
<dbReference type="PANTHER" id="PTHR37799:SF1">
    <property type="entry name" value="SMALL RIBOSOMAL SUBUNIT PROTEIN MS23"/>
    <property type="match status" value="1"/>
</dbReference>
<dbReference type="Pfam" id="PF13741">
    <property type="entry name" value="MRP-S25"/>
    <property type="match status" value="1"/>
</dbReference>
<protein>
    <recommendedName>
        <fullName evidence="2">Small ribosomal subunit protein mS23</fullName>
    </recommendedName>
    <alternativeName>
        <fullName>37S ribosomal protein S25, mitochondrial</fullName>
    </alternativeName>
</protein>
<feature type="chain" id="PRO_0000343554" description="Small ribosomal subunit protein mS23">
    <location>
        <begin position="1"/>
        <end position="259"/>
    </location>
</feature>
<keyword id="KW-0496">Mitochondrion</keyword>
<keyword id="KW-1185">Reference proteome</keyword>
<keyword id="KW-0687">Ribonucleoprotein</keyword>
<keyword id="KW-0689">Ribosomal protein</keyword>
<organism>
    <name type="scientific">Pyricularia oryzae (strain 70-15 / ATCC MYA-4617 / FGSC 8958)</name>
    <name type="common">Rice blast fungus</name>
    <name type="synonym">Magnaporthe oryzae</name>
    <dbReference type="NCBI Taxonomy" id="242507"/>
    <lineage>
        <taxon>Eukaryota</taxon>
        <taxon>Fungi</taxon>
        <taxon>Dikarya</taxon>
        <taxon>Ascomycota</taxon>
        <taxon>Pezizomycotina</taxon>
        <taxon>Sordariomycetes</taxon>
        <taxon>Sordariomycetidae</taxon>
        <taxon>Magnaporthales</taxon>
        <taxon>Pyriculariaceae</taxon>
        <taxon>Pyricularia</taxon>
    </lineage>
</organism>
<evidence type="ECO:0000250" key="1"/>
<evidence type="ECO:0000305" key="2"/>
<accession>A4R4J0</accession>
<accession>G4NH59</accession>
<gene>
    <name type="primary">RSM25</name>
    <name type="ORF">MGG_03928</name>
</gene>
<reference key="1">
    <citation type="journal article" date="2005" name="Nature">
        <title>The genome sequence of the rice blast fungus Magnaporthe grisea.</title>
        <authorList>
            <person name="Dean R.A."/>
            <person name="Talbot N.J."/>
            <person name="Ebbole D.J."/>
            <person name="Farman M.L."/>
            <person name="Mitchell T.K."/>
            <person name="Orbach M.J."/>
            <person name="Thon M.R."/>
            <person name="Kulkarni R."/>
            <person name="Xu J.-R."/>
            <person name="Pan H."/>
            <person name="Read N.D."/>
            <person name="Lee Y.-H."/>
            <person name="Carbone I."/>
            <person name="Brown D."/>
            <person name="Oh Y.Y."/>
            <person name="Donofrio N."/>
            <person name="Jeong J.S."/>
            <person name="Soanes D.M."/>
            <person name="Djonovic S."/>
            <person name="Kolomiets E."/>
            <person name="Rehmeyer C."/>
            <person name="Li W."/>
            <person name="Harding M."/>
            <person name="Kim S."/>
            <person name="Lebrun M.-H."/>
            <person name="Bohnert H."/>
            <person name="Coughlan S."/>
            <person name="Butler J."/>
            <person name="Calvo S.E."/>
            <person name="Ma L.-J."/>
            <person name="Nicol R."/>
            <person name="Purcell S."/>
            <person name="Nusbaum C."/>
            <person name="Galagan J.E."/>
            <person name="Birren B.W."/>
        </authorList>
    </citation>
    <scope>NUCLEOTIDE SEQUENCE [LARGE SCALE GENOMIC DNA]</scope>
    <source>
        <strain>70-15 / ATCC MYA-4617 / FGSC 8958</strain>
    </source>
</reference>
<sequence>MQRLRARDLRAVDLYRTVKSNLDTKFSLPGMPPGREHRQVPPPWLQAMQKIPPSEILTRPIPIQHQKPNPKARKPKNIFRPQKIVYEEDELRKTFYRDHPWELARPRVILEIDGMDSHYCDWSQGLEQPSIPLSGESVVQRQLWLMHNEGMTKEKAYDLVRREFYALRQEEEVERRIAQEEARMVGAYFGKNRLQIGNELEDHEYERWKDWAATEMAKAEAERENAMPTFGGKAKDAEASIDDLMLEGSMDAILEEKKA</sequence>